<feature type="chain" id="PRO_0000148789" description="Aspartyl/glutamyl-tRNA(Asn/Gln) amidotransferase subunit B">
    <location>
        <begin position="1"/>
        <end position="476"/>
    </location>
</feature>
<evidence type="ECO:0000255" key="1">
    <source>
        <dbReference type="HAMAP-Rule" id="MF_00121"/>
    </source>
</evidence>
<accession>Q837V2</accession>
<proteinExistence type="inferred from homology"/>
<comment type="function">
    <text evidence="1">Allows the formation of correctly charged Asn-tRNA(Asn) or Gln-tRNA(Gln) through the transamidation of misacylated Asp-tRNA(Asn) or Glu-tRNA(Gln) in organisms which lack either or both of asparaginyl-tRNA or glutaminyl-tRNA synthetases. The reaction takes place in the presence of glutamine and ATP through an activated phospho-Asp-tRNA(Asn) or phospho-Glu-tRNA(Gln).</text>
</comment>
<comment type="catalytic activity">
    <reaction evidence="1">
        <text>L-glutamyl-tRNA(Gln) + L-glutamine + ATP + H2O = L-glutaminyl-tRNA(Gln) + L-glutamate + ADP + phosphate + H(+)</text>
        <dbReference type="Rhea" id="RHEA:17521"/>
        <dbReference type="Rhea" id="RHEA-COMP:9681"/>
        <dbReference type="Rhea" id="RHEA-COMP:9684"/>
        <dbReference type="ChEBI" id="CHEBI:15377"/>
        <dbReference type="ChEBI" id="CHEBI:15378"/>
        <dbReference type="ChEBI" id="CHEBI:29985"/>
        <dbReference type="ChEBI" id="CHEBI:30616"/>
        <dbReference type="ChEBI" id="CHEBI:43474"/>
        <dbReference type="ChEBI" id="CHEBI:58359"/>
        <dbReference type="ChEBI" id="CHEBI:78520"/>
        <dbReference type="ChEBI" id="CHEBI:78521"/>
        <dbReference type="ChEBI" id="CHEBI:456216"/>
    </reaction>
</comment>
<comment type="catalytic activity">
    <reaction evidence="1">
        <text>L-aspartyl-tRNA(Asn) + L-glutamine + ATP + H2O = L-asparaginyl-tRNA(Asn) + L-glutamate + ADP + phosphate + 2 H(+)</text>
        <dbReference type="Rhea" id="RHEA:14513"/>
        <dbReference type="Rhea" id="RHEA-COMP:9674"/>
        <dbReference type="Rhea" id="RHEA-COMP:9677"/>
        <dbReference type="ChEBI" id="CHEBI:15377"/>
        <dbReference type="ChEBI" id="CHEBI:15378"/>
        <dbReference type="ChEBI" id="CHEBI:29985"/>
        <dbReference type="ChEBI" id="CHEBI:30616"/>
        <dbReference type="ChEBI" id="CHEBI:43474"/>
        <dbReference type="ChEBI" id="CHEBI:58359"/>
        <dbReference type="ChEBI" id="CHEBI:78515"/>
        <dbReference type="ChEBI" id="CHEBI:78516"/>
        <dbReference type="ChEBI" id="CHEBI:456216"/>
    </reaction>
</comment>
<comment type="subunit">
    <text evidence="1">Heterotrimer of A, B and C subunits.</text>
</comment>
<comment type="similarity">
    <text evidence="1">Belongs to the GatB/GatE family. GatB subfamily.</text>
</comment>
<protein>
    <recommendedName>
        <fullName evidence="1">Aspartyl/glutamyl-tRNA(Asn/Gln) amidotransferase subunit B</fullName>
        <shortName evidence="1">Asp/Glu-ADT subunit B</shortName>
        <ecNumber evidence="1">6.3.5.-</ecNumber>
    </recommendedName>
</protein>
<keyword id="KW-0067">ATP-binding</keyword>
<keyword id="KW-0436">Ligase</keyword>
<keyword id="KW-0547">Nucleotide-binding</keyword>
<keyword id="KW-0648">Protein biosynthesis</keyword>
<keyword id="KW-1185">Reference proteome</keyword>
<reference key="1">
    <citation type="journal article" date="2003" name="Science">
        <title>Role of mobile DNA in the evolution of vancomycin-resistant Enterococcus faecalis.</title>
        <authorList>
            <person name="Paulsen I.T."/>
            <person name="Banerjei L."/>
            <person name="Myers G.S.A."/>
            <person name="Nelson K.E."/>
            <person name="Seshadri R."/>
            <person name="Read T.D."/>
            <person name="Fouts D.E."/>
            <person name="Eisen J.A."/>
            <person name="Gill S.R."/>
            <person name="Heidelberg J.F."/>
            <person name="Tettelin H."/>
            <person name="Dodson R.J."/>
            <person name="Umayam L.A."/>
            <person name="Brinkac L.M."/>
            <person name="Beanan M.J."/>
            <person name="Daugherty S.C."/>
            <person name="DeBoy R.T."/>
            <person name="Durkin S.A."/>
            <person name="Kolonay J.F."/>
            <person name="Madupu R."/>
            <person name="Nelson W.C."/>
            <person name="Vamathevan J.J."/>
            <person name="Tran B."/>
            <person name="Upton J."/>
            <person name="Hansen T."/>
            <person name="Shetty J."/>
            <person name="Khouri H.M."/>
            <person name="Utterback T.R."/>
            <person name="Radune D."/>
            <person name="Ketchum K.A."/>
            <person name="Dougherty B.A."/>
            <person name="Fraser C.M."/>
        </authorList>
    </citation>
    <scope>NUCLEOTIDE SEQUENCE [LARGE SCALE GENOMIC DNA]</scope>
    <source>
        <strain>ATCC 700802 / V583</strain>
    </source>
</reference>
<name>GATB_ENTFA</name>
<sequence length="476" mass="53319">MNFETVIGLEVHVELKTNSKIFSSAPAHFGAEPNSNTNVVDWSYPGVLPVMNKGALEFGMKAALALNCEISKETHFDRKNYFYPDNPKAYQISQFDQPIGHDGWIEIEVEGKKKKIRIERVHLEEDAGKNIHGTDGYSYVDLNRQGTPLIEIVSEADMRSPEEAYAYLEALRSIIQFTEVSDVKMEEGSMRCDANISLRPYGQEEFGTKAELKNLNSMNFVKKGLAYEEKRQAKVLLSGGEIQQETRRFDEATSTTLLMRVKEGSSDYRYFPEPDVPRFSIDDEWIEKVRASLPEMPASRRARYISELGLPEYDAMVLTLTKEMSDFFEATLANGADAKQASNWLMGEVSAYLNSEKVELADTKLTPENLAGMITLINDGTISSKIAKKVFKELIENGGDAKEVVEAKGLVQLSDPAQLLPMINEVLDNNQQSIDDFKNGKDRAVGFLVGQIMKATRGQANPGVVNKLLQEELSKR</sequence>
<organism>
    <name type="scientific">Enterococcus faecalis (strain ATCC 700802 / V583)</name>
    <dbReference type="NCBI Taxonomy" id="226185"/>
    <lineage>
        <taxon>Bacteria</taxon>
        <taxon>Bacillati</taxon>
        <taxon>Bacillota</taxon>
        <taxon>Bacilli</taxon>
        <taxon>Lactobacillales</taxon>
        <taxon>Enterococcaceae</taxon>
        <taxon>Enterococcus</taxon>
    </lineage>
</organism>
<dbReference type="EC" id="6.3.5.-" evidence="1"/>
<dbReference type="EMBL" id="AE016830">
    <property type="protein sequence ID" value="AAO80546.1"/>
    <property type="molecule type" value="Genomic_DNA"/>
</dbReference>
<dbReference type="RefSeq" id="NP_814476.1">
    <property type="nucleotide sequence ID" value="NC_004668.1"/>
</dbReference>
<dbReference type="RefSeq" id="WP_002358703.1">
    <property type="nucleotide sequence ID" value="NZ_KE136527.1"/>
</dbReference>
<dbReference type="SMR" id="Q837V2"/>
<dbReference type="STRING" id="226185.EF_0726"/>
<dbReference type="EnsemblBacteria" id="AAO80546">
    <property type="protein sequence ID" value="AAO80546"/>
    <property type="gene ID" value="EF_0726"/>
</dbReference>
<dbReference type="GeneID" id="60893024"/>
<dbReference type="KEGG" id="efa:EF0726"/>
<dbReference type="PATRIC" id="fig|226185.45.peg.2667"/>
<dbReference type="eggNOG" id="COG0064">
    <property type="taxonomic scope" value="Bacteria"/>
</dbReference>
<dbReference type="HOGENOM" id="CLU_019240_0_0_9"/>
<dbReference type="Proteomes" id="UP000001415">
    <property type="component" value="Chromosome"/>
</dbReference>
<dbReference type="GO" id="GO:0050566">
    <property type="term" value="F:asparaginyl-tRNA synthase (glutamine-hydrolyzing) activity"/>
    <property type="evidence" value="ECO:0007669"/>
    <property type="project" value="RHEA"/>
</dbReference>
<dbReference type="GO" id="GO:0005524">
    <property type="term" value="F:ATP binding"/>
    <property type="evidence" value="ECO:0007669"/>
    <property type="project" value="UniProtKB-KW"/>
</dbReference>
<dbReference type="GO" id="GO:0050567">
    <property type="term" value="F:glutaminyl-tRNA synthase (glutamine-hydrolyzing) activity"/>
    <property type="evidence" value="ECO:0007669"/>
    <property type="project" value="UniProtKB-UniRule"/>
</dbReference>
<dbReference type="GO" id="GO:0070681">
    <property type="term" value="P:glutaminyl-tRNAGln biosynthesis via transamidation"/>
    <property type="evidence" value="ECO:0007669"/>
    <property type="project" value="TreeGrafter"/>
</dbReference>
<dbReference type="GO" id="GO:0006412">
    <property type="term" value="P:translation"/>
    <property type="evidence" value="ECO:0007669"/>
    <property type="project" value="UniProtKB-UniRule"/>
</dbReference>
<dbReference type="FunFam" id="1.10.10.410:FF:000001">
    <property type="entry name" value="Aspartyl/glutamyl-tRNA(Asn/Gln) amidotransferase subunit B"/>
    <property type="match status" value="1"/>
</dbReference>
<dbReference type="FunFam" id="1.10.150.380:FF:000001">
    <property type="entry name" value="Aspartyl/glutamyl-tRNA(Asn/Gln) amidotransferase subunit B"/>
    <property type="match status" value="1"/>
</dbReference>
<dbReference type="Gene3D" id="1.10.10.410">
    <property type="match status" value="1"/>
</dbReference>
<dbReference type="Gene3D" id="1.10.150.380">
    <property type="entry name" value="GatB domain, N-terminal subdomain"/>
    <property type="match status" value="1"/>
</dbReference>
<dbReference type="HAMAP" id="MF_00121">
    <property type="entry name" value="GatB"/>
    <property type="match status" value="1"/>
</dbReference>
<dbReference type="InterPro" id="IPR017959">
    <property type="entry name" value="Asn/Gln-tRNA_amidoTrfase_suB/E"/>
</dbReference>
<dbReference type="InterPro" id="IPR006075">
    <property type="entry name" value="Asn/Gln-tRNA_Trfase_suB/E_cat"/>
</dbReference>
<dbReference type="InterPro" id="IPR018027">
    <property type="entry name" value="Asn/Gln_amidotransferase"/>
</dbReference>
<dbReference type="InterPro" id="IPR003789">
    <property type="entry name" value="Asn/Gln_tRNA_amidoTrase-B-like"/>
</dbReference>
<dbReference type="InterPro" id="IPR004413">
    <property type="entry name" value="GatB"/>
</dbReference>
<dbReference type="InterPro" id="IPR042114">
    <property type="entry name" value="GatB_C_1"/>
</dbReference>
<dbReference type="InterPro" id="IPR023168">
    <property type="entry name" value="GatB_Yqey_C_2"/>
</dbReference>
<dbReference type="InterPro" id="IPR017958">
    <property type="entry name" value="Gln-tRNA_amidoTrfase_suB_CS"/>
</dbReference>
<dbReference type="InterPro" id="IPR014746">
    <property type="entry name" value="Gln_synth/guanido_kin_cat_dom"/>
</dbReference>
<dbReference type="NCBIfam" id="TIGR00133">
    <property type="entry name" value="gatB"/>
    <property type="match status" value="1"/>
</dbReference>
<dbReference type="NCBIfam" id="NF004011">
    <property type="entry name" value="PRK05477.1-1"/>
    <property type="match status" value="1"/>
</dbReference>
<dbReference type="NCBIfam" id="NF004012">
    <property type="entry name" value="PRK05477.1-2"/>
    <property type="match status" value="1"/>
</dbReference>
<dbReference type="NCBIfam" id="NF004014">
    <property type="entry name" value="PRK05477.1-4"/>
    <property type="match status" value="1"/>
</dbReference>
<dbReference type="PANTHER" id="PTHR11659">
    <property type="entry name" value="GLUTAMYL-TRNA GLN AMIDOTRANSFERASE SUBUNIT B MITOCHONDRIAL AND PROKARYOTIC PET112-RELATED"/>
    <property type="match status" value="1"/>
</dbReference>
<dbReference type="PANTHER" id="PTHR11659:SF0">
    <property type="entry name" value="GLUTAMYL-TRNA(GLN) AMIDOTRANSFERASE SUBUNIT B, MITOCHONDRIAL"/>
    <property type="match status" value="1"/>
</dbReference>
<dbReference type="Pfam" id="PF02934">
    <property type="entry name" value="GatB_N"/>
    <property type="match status" value="1"/>
</dbReference>
<dbReference type="Pfam" id="PF02637">
    <property type="entry name" value="GatB_Yqey"/>
    <property type="match status" value="1"/>
</dbReference>
<dbReference type="SMART" id="SM00845">
    <property type="entry name" value="GatB_Yqey"/>
    <property type="match status" value="1"/>
</dbReference>
<dbReference type="SUPFAM" id="SSF89095">
    <property type="entry name" value="GatB/YqeY motif"/>
    <property type="match status" value="1"/>
</dbReference>
<dbReference type="SUPFAM" id="SSF55931">
    <property type="entry name" value="Glutamine synthetase/guanido kinase"/>
    <property type="match status" value="1"/>
</dbReference>
<dbReference type="PROSITE" id="PS01234">
    <property type="entry name" value="GATB"/>
    <property type="match status" value="1"/>
</dbReference>
<gene>
    <name evidence="1" type="primary">gatB</name>
    <name type="ordered locus">EF_0726</name>
</gene>